<proteinExistence type="evidence at transcript level"/>
<organism>
    <name type="scientific">Triticum aestivum</name>
    <name type="common">Wheat</name>
    <dbReference type="NCBI Taxonomy" id="4565"/>
    <lineage>
        <taxon>Eukaryota</taxon>
        <taxon>Viridiplantae</taxon>
        <taxon>Streptophyta</taxon>
        <taxon>Embryophyta</taxon>
        <taxon>Tracheophyta</taxon>
        <taxon>Spermatophyta</taxon>
        <taxon>Magnoliopsida</taxon>
        <taxon>Liliopsida</taxon>
        <taxon>Poales</taxon>
        <taxon>Poaceae</taxon>
        <taxon>BOP clade</taxon>
        <taxon>Pooideae</taxon>
        <taxon>Triticodae</taxon>
        <taxon>Triticeae</taxon>
        <taxon>Triticinae</taxon>
        <taxon>Triticum</taxon>
    </lineage>
</organism>
<sequence length="224" mass="23238">MASNQNQASYHAGETKARNEEKTGQVMGATKDKAGQTTEATKQKAGETTEATKQKAAETTEAAKQKASETAEATKQKAAEAKDKTAQTAQAAKEKTYETAQSAKERAAQGKDQTASTLGEKTEAAKQKAAETTEAARQKAAEATEAAKQKASETAQYTKESAVTGKDKTGSVLQQAGETVVNAVVGAKDAVANTLGMGGDNTITTKDNTTGATTKDTTTTTRNH</sequence>
<reference key="1">
    <citation type="journal article" date="1991" name="Plant Mol. Biol.">
        <title>Sequence analysis of a cDNA encoding a group 3 LEA mRNA inducible by ABA or dehydration stress in wheat.</title>
        <authorList>
            <person name="Curry J."/>
            <person name="Morris C.F."/>
            <person name="Walker-Simmons M.K."/>
        </authorList>
    </citation>
    <scope>NUCLEOTIDE SEQUENCE [MRNA]</scope>
    <source>
        <strain>cv. Brevor</strain>
    </source>
</reference>
<name>LEA3_WHEAT</name>
<accession>Q03968</accession>
<dbReference type="EMBL" id="X56882">
    <property type="protein sequence ID" value="CAA40204.1"/>
    <property type="molecule type" value="mRNA"/>
</dbReference>
<dbReference type="SMR" id="Q03968"/>
<dbReference type="STRING" id="4565.Q03968"/>
<dbReference type="PaxDb" id="4565-Traes_1AL_34404D5D8.2"/>
<dbReference type="eggNOG" id="KOG4744">
    <property type="taxonomic scope" value="Eukaryota"/>
</dbReference>
<dbReference type="Proteomes" id="UP000019116">
    <property type="component" value="Unplaced"/>
</dbReference>
<dbReference type="ExpressionAtlas" id="Q03968">
    <property type="expression patterns" value="baseline and differential"/>
</dbReference>
<dbReference type="GO" id="GO:0005634">
    <property type="term" value="C:nucleus"/>
    <property type="evidence" value="ECO:0000318"/>
    <property type="project" value="GO_Central"/>
</dbReference>
<dbReference type="Gene3D" id="6.10.140.1430">
    <property type="match status" value="1"/>
</dbReference>
<dbReference type="PANTHER" id="PTHR47372">
    <property type="entry name" value="DAUER UP-REGULATED-RELATED"/>
    <property type="match status" value="1"/>
</dbReference>
<dbReference type="PANTHER" id="PTHR47372:SF11">
    <property type="entry name" value="RE19971P"/>
    <property type="match status" value="1"/>
</dbReference>
<dbReference type="SUPFAM" id="SSF58113">
    <property type="entry name" value="Apolipoprotein A-I"/>
    <property type="match status" value="1"/>
</dbReference>
<comment type="induction">
    <text>By abscisic acid (ABA) and dehydration.</text>
</comment>
<comment type="similarity">
    <text evidence="2">Belongs to the LEA type 4 family.</text>
</comment>
<feature type="chain" id="PRO_0000221226" description="Late embryogenesis abundant protein, group 3">
    <location>
        <begin position="1"/>
        <end position="224"/>
    </location>
</feature>
<feature type="repeat" description="1">
    <location>
        <begin position="26"/>
        <end position="36"/>
    </location>
</feature>
<feature type="repeat" description="2">
    <location>
        <begin position="37"/>
        <end position="47"/>
    </location>
</feature>
<feature type="repeat" description="3">
    <location>
        <begin position="48"/>
        <end position="58"/>
    </location>
</feature>
<feature type="repeat" description="4">
    <location>
        <begin position="59"/>
        <end position="69"/>
    </location>
</feature>
<feature type="repeat" description="5">
    <location>
        <begin position="70"/>
        <end position="80"/>
    </location>
</feature>
<feature type="repeat" description="6; truncated">
    <location>
        <begin position="81"/>
        <end position="87"/>
    </location>
</feature>
<feature type="repeat" description="7">
    <location>
        <begin position="88"/>
        <end position="98"/>
    </location>
</feature>
<feature type="repeat" description="8">
    <location>
        <begin position="99"/>
        <end position="109"/>
    </location>
</feature>
<feature type="repeat" description="9">
    <location>
        <begin position="121"/>
        <end position="131"/>
    </location>
</feature>
<feature type="repeat" description="10">
    <location>
        <begin position="132"/>
        <end position="142"/>
    </location>
</feature>
<feature type="repeat" description="11">
    <location>
        <begin position="143"/>
        <end position="153"/>
    </location>
</feature>
<feature type="region of interest" description="Disordered" evidence="1">
    <location>
        <begin position="1"/>
        <end position="169"/>
    </location>
</feature>
<feature type="region of interest" description="12 X 11 AA tandem repeats">
    <location>
        <begin position="26"/>
        <end position="153"/>
    </location>
</feature>
<feature type="region of interest" description="Disordered" evidence="1">
    <location>
        <begin position="193"/>
        <end position="224"/>
    </location>
</feature>
<feature type="compositionally biased region" description="Basic and acidic residues" evidence="1">
    <location>
        <begin position="13"/>
        <end position="23"/>
    </location>
</feature>
<feature type="compositionally biased region" description="Basic and acidic residues" evidence="1">
    <location>
        <begin position="41"/>
        <end position="85"/>
    </location>
</feature>
<feature type="compositionally biased region" description="Basic and acidic residues" evidence="1">
    <location>
        <begin position="92"/>
        <end position="109"/>
    </location>
</feature>
<feature type="compositionally biased region" description="Basic and acidic residues" evidence="1">
    <location>
        <begin position="120"/>
        <end position="151"/>
    </location>
</feature>
<feature type="compositionally biased region" description="Low complexity" evidence="1">
    <location>
        <begin position="200"/>
        <end position="224"/>
    </location>
</feature>
<evidence type="ECO:0000256" key="1">
    <source>
        <dbReference type="SAM" id="MobiDB-lite"/>
    </source>
</evidence>
<evidence type="ECO:0000305" key="2"/>
<protein>
    <recommendedName>
        <fullName>Late embryogenesis abundant protein, group 3</fullName>
        <shortName>LEA</shortName>
    </recommendedName>
    <alternativeName>
        <fullName>PMA2005</fullName>
    </alternativeName>
</protein>
<keyword id="KW-1185">Reference proteome</keyword>
<keyword id="KW-0677">Repeat</keyword>
<keyword id="KW-0346">Stress response</keyword>